<name>ANM7_MOUSE</name>
<sequence length="692" mass="78301">MKVFCGRANPTTGSLEWLEEDEHYDYHQEIARSSYADMLHDKDRNIKYYQGIRAAVSRVKDRGQKALVLDIGTGTGLLSMMAVTAGADFCYAIEVFKPMAEAAVKIVERNGFSDKIKVINKHSTEVTVGPDGDLPCRANILITELFDTELIGEGALPSYEHAHKHLVQEDCEAVPHRATVYAQLVESRRMWSWNKLFPVRVRTSLGEQVIVPPSELERCPGAPSVCDIQLNQVSPADFTVLSDVLPMFSVDFSKQVSSSAACHSRQFVPLASGQAQVVLSWWDIEMDPEGKIKCTMAPFWAQTDPQELQWRDHWMQCVYFLPQEEPVVQGSPRCLVAHHDDYCVWYSLQRTSPDENDSAYQVRPVCDCQAHLLWNRPRFGEINDQDRTDHYAQALRTVLLPGSVCLCVSDGSLLSMLAHHLGAEQVFTVESSVASYRLMKRIFKVNHLEDKISVINKRPELLTAADLEGKKVSLLLGEPFFTTSLLPWHNLYFWYVRTSVDQHLAPGAVVMPQAASLHAVIVEFRDLWRIRSPCGDCEGFDVHIMDDMIKHSLDFRESREAEPHPLWEYPCRSLSKPQEILTFDFQQPIPQQPMQSKGTMELTRPGKSHGAVLWMEYQLTPDSTISTGLINPAEDKGDCCWNPHCKQAVYFLSTTLDLRVPLNGPRSVSYVVEFHPLTGDITMEFRLADTLS</sequence>
<dbReference type="EC" id="2.1.1.321" evidence="2"/>
<dbReference type="EMBL" id="AY673972">
    <property type="protein sequence ID" value="AAT76979.1"/>
    <property type="molecule type" value="mRNA"/>
</dbReference>
<dbReference type="EMBL" id="AK173304">
    <property type="protein sequence ID" value="BAD32582.1"/>
    <property type="status" value="ALT_INIT"/>
    <property type="molecule type" value="mRNA"/>
</dbReference>
<dbReference type="EMBL" id="AK154255">
    <property type="protein sequence ID" value="BAE32467.1"/>
    <property type="molecule type" value="mRNA"/>
</dbReference>
<dbReference type="EMBL" id="AK162376">
    <property type="protein sequence ID" value="BAE36880.1"/>
    <property type="molecule type" value="mRNA"/>
</dbReference>
<dbReference type="EMBL" id="CH466525">
    <property type="protein sequence ID" value="EDL11358.1"/>
    <property type="molecule type" value="Genomic_DNA"/>
</dbReference>
<dbReference type="EMBL" id="BC006705">
    <property type="protein sequence ID" value="AAH06705.1"/>
    <property type="molecule type" value="mRNA"/>
</dbReference>
<dbReference type="EMBL" id="BC057177">
    <property type="protein sequence ID" value="AAH57177.1"/>
    <property type="molecule type" value="mRNA"/>
</dbReference>
<dbReference type="CCDS" id="CCDS22633.1"/>
<dbReference type="RefSeq" id="NP_663379.1">
    <property type="nucleotide sequence ID" value="NM_145404.1"/>
</dbReference>
<dbReference type="PDB" id="4C4A">
    <property type="method" value="X-ray"/>
    <property type="resolution" value="1.70 A"/>
    <property type="chains" value="A=1-692"/>
</dbReference>
<dbReference type="PDB" id="6OGN">
    <property type="method" value="X-ray"/>
    <property type="resolution" value="2.40 A"/>
    <property type="chains" value="A=1-692"/>
</dbReference>
<dbReference type="PDBsum" id="4C4A"/>
<dbReference type="PDBsum" id="6OGN"/>
<dbReference type="SMR" id="Q922X9"/>
<dbReference type="BioGRID" id="229540">
    <property type="interactions" value="1"/>
</dbReference>
<dbReference type="DIP" id="DIP-29210N"/>
<dbReference type="FunCoup" id="Q922X9">
    <property type="interactions" value="4949"/>
</dbReference>
<dbReference type="IntAct" id="Q922X9">
    <property type="interactions" value="1"/>
</dbReference>
<dbReference type="STRING" id="10090.ENSMUSP00000071521"/>
<dbReference type="GlyGen" id="Q922X9">
    <property type="glycosylation" value="1 site"/>
</dbReference>
<dbReference type="iPTMnet" id="Q922X9"/>
<dbReference type="PhosphoSitePlus" id="Q922X9"/>
<dbReference type="SwissPalm" id="Q922X9"/>
<dbReference type="PaxDb" id="10090-ENSMUSP00000071521"/>
<dbReference type="PeptideAtlas" id="Q922X9"/>
<dbReference type="ProteomicsDB" id="296252"/>
<dbReference type="Pumba" id="Q922X9"/>
<dbReference type="Antibodypedia" id="29775">
    <property type="antibodies" value="269 antibodies from 32 providers"/>
</dbReference>
<dbReference type="DNASU" id="214572"/>
<dbReference type="Ensembl" id="ENSMUST00000071592.12">
    <property type="protein sequence ID" value="ENSMUSP00000071521.6"/>
    <property type="gene ID" value="ENSMUSG00000060098.12"/>
</dbReference>
<dbReference type="GeneID" id="214572"/>
<dbReference type="KEGG" id="mmu:214572"/>
<dbReference type="UCSC" id="uc009nfu.1">
    <property type="organism name" value="mouse"/>
</dbReference>
<dbReference type="AGR" id="MGI:2384879"/>
<dbReference type="CTD" id="54496"/>
<dbReference type="MGI" id="MGI:2384879">
    <property type="gene designation" value="Prmt7"/>
</dbReference>
<dbReference type="VEuPathDB" id="HostDB:ENSMUSG00000060098"/>
<dbReference type="eggNOG" id="KOG1501">
    <property type="taxonomic scope" value="Eukaryota"/>
</dbReference>
<dbReference type="GeneTree" id="ENSGT00940000156879"/>
<dbReference type="HOGENOM" id="CLU_015180_0_0_1"/>
<dbReference type="InParanoid" id="Q922X9"/>
<dbReference type="OMA" id="CHHDEYS"/>
<dbReference type="OrthoDB" id="412876at2759"/>
<dbReference type="PhylomeDB" id="Q922X9"/>
<dbReference type="TreeFam" id="TF315221"/>
<dbReference type="BRENDA" id="2.1.1.321">
    <property type="organism ID" value="3474"/>
</dbReference>
<dbReference type="Reactome" id="R-MMU-3214858">
    <property type="pathway name" value="RMTs methylate histone arginines"/>
</dbReference>
<dbReference type="BioGRID-ORCS" id="214572">
    <property type="hits" value="11 hits in 85 CRISPR screens"/>
</dbReference>
<dbReference type="ChiTaRS" id="Prmt7">
    <property type="organism name" value="mouse"/>
</dbReference>
<dbReference type="EvolutionaryTrace" id="Q922X9"/>
<dbReference type="PRO" id="PR:Q922X9"/>
<dbReference type="Proteomes" id="UP000000589">
    <property type="component" value="Chromosome 8"/>
</dbReference>
<dbReference type="RNAct" id="Q922X9">
    <property type="molecule type" value="protein"/>
</dbReference>
<dbReference type="Bgee" id="ENSMUSG00000060098">
    <property type="expression patterns" value="Expressed in spermatid and 250 other cell types or tissues"/>
</dbReference>
<dbReference type="ExpressionAtlas" id="Q922X9">
    <property type="expression patterns" value="baseline and differential"/>
</dbReference>
<dbReference type="GO" id="GO:0005829">
    <property type="term" value="C:cytosol"/>
    <property type="evidence" value="ECO:0000250"/>
    <property type="project" value="UniProtKB"/>
</dbReference>
<dbReference type="GO" id="GO:0001650">
    <property type="term" value="C:fibrillar center"/>
    <property type="evidence" value="ECO:0007669"/>
    <property type="project" value="Ensembl"/>
</dbReference>
<dbReference type="GO" id="GO:0005654">
    <property type="term" value="C:nucleoplasm"/>
    <property type="evidence" value="ECO:0007669"/>
    <property type="project" value="Ensembl"/>
</dbReference>
<dbReference type="GO" id="GO:0005634">
    <property type="term" value="C:nucleus"/>
    <property type="evidence" value="ECO:0000250"/>
    <property type="project" value="UniProtKB"/>
</dbReference>
<dbReference type="GO" id="GO:0042393">
    <property type="term" value="F:histone binding"/>
    <property type="evidence" value="ECO:0007669"/>
    <property type="project" value="Ensembl"/>
</dbReference>
<dbReference type="GO" id="GO:0140939">
    <property type="term" value="F:histone H4 methyltransferase activity"/>
    <property type="evidence" value="ECO:0000250"/>
    <property type="project" value="HGNC-UCL"/>
</dbReference>
<dbReference type="GO" id="GO:0044020">
    <property type="term" value="F:histone H4R3 methyltransferase activity"/>
    <property type="evidence" value="ECO:0000314"/>
    <property type="project" value="UniProtKB"/>
</dbReference>
<dbReference type="GO" id="GO:0035241">
    <property type="term" value="F:protein-arginine omega-N monomethyltransferase activity"/>
    <property type="evidence" value="ECO:0000250"/>
    <property type="project" value="HGNC-UCL"/>
</dbReference>
<dbReference type="GO" id="GO:0035243">
    <property type="term" value="F:protein-arginine omega-N symmetric methyltransferase activity"/>
    <property type="evidence" value="ECO:0000314"/>
    <property type="project" value="UniProtKB"/>
</dbReference>
<dbReference type="GO" id="GO:0043021">
    <property type="term" value="F:ribonucleoprotein complex binding"/>
    <property type="evidence" value="ECO:0007669"/>
    <property type="project" value="Ensembl"/>
</dbReference>
<dbReference type="GO" id="GO:0008757">
    <property type="term" value="F:S-adenosylmethionine-dependent methyltransferase activity"/>
    <property type="evidence" value="ECO:0000250"/>
    <property type="project" value="HGNC-UCL"/>
</dbReference>
<dbReference type="GO" id="GO:0071514">
    <property type="term" value="P:genomic imprinting"/>
    <property type="evidence" value="ECO:0000314"/>
    <property type="project" value="UniProtKB"/>
</dbReference>
<dbReference type="GO" id="GO:0032259">
    <property type="term" value="P:methylation"/>
    <property type="evidence" value="ECO:0007669"/>
    <property type="project" value="UniProtKB-KW"/>
</dbReference>
<dbReference type="GO" id="GO:0000387">
    <property type="term" value="P:spliceosomal snRNP assembly"/>
    <property type="evidence" value="ECO:0000250"/>
    <property type="project" value="UniProtKB"/>
</dbReference>
<dbReference type="CDD" id="cd02440">
    <property type="entry name" value="AdoMet_MTases"/>
    <property type="match status" value="1"/>
</dbReference>
<dbReference type="FunFam" id="2.70.160.11:FF:000010">
    <property type="entry name" value="Protein arginine N-methyltransferase"/>
    <property type="match status" value="1"/>
</dbReference>
<dbReference type="FunFam" id="2.70.160.11:FF:000004">
    <property type="entry name" value="Protein arginine N-methyltransferase 7"/>
    <property type="match status" value="1"/>
</dbReference>
<dbReference type="FunFam" id="3.40.50.150:FF:000070">
    <property type="entry name" value="Protein arginine N-methyltransferase 7"/>
    <property type="match status" value="1"/>
</dbReference>
<dbReference type="FunFam" id="3.40.50.150:FF:000071">
    <property type="entry name" value="Protein arginine N-methyltransferase 7"/>
    <property type="match status" value="1"/>
</dbReference>
<dbReference type="Gene3D" id="2.70.160.11">
    <property type="entry name" value="Hnrnp arginine n-methyltransferase1"/>
    <property type="match status" value="2"/>
</dbReference>
<dbReference type="Gene3D" id="3.40.50.150">
    <property type="entry name" value="Vaccinia Virus protein VP39"/>
    <property type="match status" value="2"/>
</dbReference>
<dbReference type="InterPro" id="IPR025799">
    <property type="entry name" value="Arg_MeTrfase"/>
</dbReference>
<dbReference type="InterPro" id="IPR014644">
    <property type="entry name" value="MeTrfase_PRMT7"/>
</dbReference>
<dbReference type="InterPro" id="IPR055135">
    <property type="entry name" value="PRMT_dom"/>
</dbReference>
<dbReference type="InterPro" id="IPR029063">
    <property type="entry name" value="SAM-dependent_MTases_sf"/>
</dbReference>
<dbReference type="PANTHER" id="PTHR11006">
    <property type="entry name" value="PROTEIN ARGININE N-METHYLTRANSFERASE"/>
    <property type="match status" value="1"/>
</dbReference>
<dbReference type="PANTHER" id="PTHR11006:SF4">
    <property type="entry name" value="PROTEIN ARGININE N-METHYLTRANSFERASE 7"/>
    <property type="match status" value="1"/>
</dbReference>
<dbReference type="Pfam" id="PF06325">
    <property type="entry name" value="PrmA"/>
    <property type="match status" value="1"/>
</dbReference>
<dbReference type="Pfam" id="PF22528">
    <property type="entry name" value="PRMT_C"/>
    <property type="match status" value="2"/>
</dbReference>
<dbReference type="PIRSF" id="PIRSF036946">
    <property type="entry name" value="Arg_N-mtase"/>
    <property type="match status" value="1"/>
</dbReference>
<dbReference type="SUPFAM" id="SSF53335">
    <property type="entry name" value="S-adenosyl-L-methionine-dependent methyltransferases"/>
    <property type="match status" value="2"/>
</dbReference>
<dbReference type="PROSITE" id="PS51678">
    <property type="entry name" value="SAM_MT_PRMT"/>
    <property type="match status" value="2"/>
</dbReference>
<gene>
    <name type="primary">Prmt7</name>
    <name type="synonym">Kiaa1933</name>
</gene>
<protein>
    <recommendedName>
        <fullName>Protein arginine N-methyltransferase 7</fullName>
        <ecNumber evidence="2">2.1.1.321</ecNumber>
    </recommendedName>
    <alternativeName>
        <fullName>Histone-arginine N-methyltransferase PRMT7</fullName>
    </alternativeName>
    <alternativeName>
        <fullName>[Myelin basic protein]-arginine N-methyltransferase PRMT7</fullName>
    </alternativeName>
</protein>
<proteinExistence type="evidence at protein level"/>
<keyword id="KW-0002">3D-structure</keyword>
<keyword id="KW-0156">Chromatin regulator</keyword>
<keyword id="KW-0963">Cytoplasm</keyword>
<keyword id="KW-0221">Differentiation</keyword>
<keyword id="KW-0488">Methylation</keyword>
<keyword id="KW-0489">Methyltransferase</keyword>
<keyword id="KW-0539">Nucleus</keyword>
<keyword id="KW-1185">Reference proteome</keyword>
<keyword id="KW-0677">Repeat</keyword>
<keyword id="KW-0949">S-adenosyl-L-methionine</keyword>
<keyword id="KW-0804">Transcription</keyword>
<keyword id="KW-0805">Transcription regulation</keyword>
<keyword id="KW-0808">Transferase</keyword>
<feature type="chain" id="PRO_0000212336" description="Protein arginine N-methyltransferase 7">
    <location>
        <begin position="1"/>
        <end position="692"/>
    </location>
</feature>
<feature type="domain" description="SAM-dependent MTase PRMT-type 1" evidence="3">
    <location>
        <begin position="14"/>
        <end position="345"/>
    </location>
</feature>
<feature type="domain" description="SAM-dependent MTase PRMT-type 2" evidence="3">
    <location>
        <begin position="358"/>
        <end position="684"/>
    </location>
</feature>
<feature type="active site" evidence="1">
    <location>
        <position position="144"/>
    </location>
</feature>
<feature type="active site" evidence="1">
    <location>
        <position position="153"/>
    </location>
</feature>
<feature type="modified residue" description="Omega-N-methylarginine" evidence="9">
    <location>
        <position position="32"/>
    </location>
</feature>
<feature type="sequence conflict" description="In Ref. 5; AAH57177." evidence="8" ref="5">
    <original>D</original>
    <variation>E</variation>
    <location>
        <position position="37"/>
    </location>
</feature>
<feature type="sequence conflict" description="In Ref. 3; BAE36880." evidence="8" ref="3">
    <original>V</original>
    <variation>G</variation>
    <location>
        <position position="612"/>
    </location>
</feature>
<feature type="helix" evidence="10">
    <location>
        <begin position="28"/>
        <end position="31"/>
    </location>
</feature>
<feature type="helix" evidence="10">
    <location>
        <begin position="35"/>
        <end position="39"/>
    </location>
</feature>
<feature type="helix" evidence="10">
    <location>
        <begin position="42"/>
        <end position="61"/>
    </location>
</feature>
<feature type="strand" evidence="10">
    <location>
        <begin position="67"/>
        <end position="72"/>
    </location>
</feature>
<feature type="helix" evidence="10">
    <location>
        <begin position="77"/>
        <end position="85"/>
    </location>
</feature>
<feature type="strand" evidence="10">
    <location>
        <begin position="88"/>
        <end position="93"/>
    </location>
</feature>
<feature type="helix" evidence="10">
    <location>
        <begin position="97"/>
        <end position="109"/>
    </location>
</feature>
<feature type="turn" evidence="10">
    <location>
        <begin position="113"/>
        <end position="115"/>
    </location>
</feature>
<feature type="strand" evidence="10">
    <location>
        <begin position="116"/>
        <end position="119"/>
    </location>
</feature>
<feature type="helix" evidence="10">
    <location>
        <begin position="123"/>
        <end position="125"/>
    </location>
</feature>
<feature type="strand" evidence="10">
    <location>
        <begin position="132"/>
        <end position="136"/>
    </location>
</feature>
<feature type="strand" evidence="10">
    <location>
        <begin position="138"/>
        <end position="143"/>
    </location>
</feature>
<feature type="helix" evidence="10">
    <location>
        <begin position="155"/>
        <end position="165"/>
    </location>
</feature>
<feature type="strand" evidence="10">
    <location>
        <begin position="167"/>
        <end position="175"/>
    </location>
</feature>
<feature type="strand" evidence="10">
    <location>
        <begin position="177"/>
        <end position="186"/>
    </location>
</feature>
<feature type="helix" evidence="10">
    <location>
        <begin position="188"/>
        <end position="191"/>
    </location>
</feature>
<feature type="turn" evidence="10">
    <location>
        <begin position="192"/>
        <end position="194"/>
    </location>
</feature>
<feature type="strand" evidence="10">
    <location>
        <begin position="199"/>
        <end position="203"/>
    </location>
</feature>
<feature type="strand" evidence="10">
    <location>
        <begin position="206"/>
        <end position="210"/>
    </location>
</feature>
<feature type="helix" evidence="10">
    <location>
        <begin position="214"/>
        <end position="218"/>
    </location>
</feature>
<feature type="strand" evidence="10">
    <location>
        <begin position="226"/>
        <end position="228"/>
    </location>
</feature>
<feature type="helix" evidence="10">
    <location>
        <begin position="230"/>
        <end position="232"/>
    </location>
</feature>
<feature type="helix" evidence="10">
    <location>
        <begin position="235"/>
        <end position="237"/>
    </location>
</feature>
<feature type="strand" evidence="10">
    <location>
        <begin position="245"/>
        <end position="251"/>
    </location>
</feature>
<feature type="strand" evidence="10">
    <location>
        <begin position="261"/>
        <end position="267"/>
    </location>
</feature>
<feature type="strand" evidence="10">
    <location>
        <begin position="273"/>
        <end position="287"/>
    </location>
</feature>
<feature type="strand" evidence="10">
    <location>
        <begin position="292"/>
        <end position="295"/>
    </location>
</feature>
<feature type="helix" evidence="10">
    <location>
        <begin position="299"/>
        <end position="301"/>
    </location>
</feature>
<feature type="helix" evidence="10">
    <location>
        <begin position="305"/>
        <end position="307"/>
    </location>
</feature>
<feature type="strand" evidence="10">
    <location>
        <begin position="312"/>
        <end position="314"/>
    </location>
</feature>
<feature type="strand" evidence="10">
    <location>
        <begin position="316"/>
        <end position="327"/>
    </location>
</feature>
<feature type="strand" evidence="10">
    <location>
        <begin position="333"/>
        <end position="339"/>
    </location>
</feature>
<feature type="strand" evidence="10">
    <location>
        <begin position="344"/>
        <end position="348"/>
    </location>
</feature>
<feature type="strand" evidence="11">
    <location>
        <begin position="367"/>
        <end position="369"/>
    </location>
</feature>
<feature type="helix" evidence="10">
    <location>
        <begin position="370"/>
        <end position="373"/>
    </location>
</feature>
<feature type="helix" evidence="10">
    <location>
        <begin position="376"/>
        <end position="382"/>
    </location>
</feature>
<feature type="helix" evidence="10">
    <location>
        <begin position="385"/>
        <end position="398"/>
    </location>
</feature>
<feature type="strand" evidence="10">
    <location>
        <begin position="404"/>
        <end position="409"/>
    </location>
</feature>
<feature type="helix" evidence="10">
    <location>
        <begin position="414"/>
        <end position="420"/>
    </location>
</feature>
<feature type="strand" evidence="10">
    <location>
        <begin position="424"/>
        <end position="429"/>
    </location>
</feature>
<feature type="helix" evidence="10">
    <location>
        <begin position="433"/>
        <end position="445"/>
    </location>
</feature>
<feature type="turn" evidence="10">
    <location>
        <begin position="449"/>
        <end position="451"/>
    </location>
</feature>
<feature type="strand" evidence="10">
    <location>
        <begin position="452"/>
        <end position="455"/>
    </location>
</feature>
<feature type="helix" evidence="10">
    <location>
        <begin position="459"/>
        <end position="461"/>
    </location>
</feature>
<feature type="helix" evidence="10">
    <location>
        <begin position="465"/>
        <end position="467"/>
    </location>
</feature>
<feature type="strand" evidence="10">
    <location>
        <begin position="472"/>
        <end position="476"/>
    </location>
</feature>
<feature type="helix" evidence="10">
    <location>
        <begin position="487"/>
        <end position="491"/>
    </location>
</feature>
<feature type="helix" evidence="10">
    <location>
        <begin position="492"/>
        <end position="499"/>
    </location>
</feature>
<feature type="helix" evidence="10">
    <location>
        <begin position="501"/>
        <end position="503"/>
    </location>
</feature>
<feature type="strand" evidence="10">
    <location>
        <begin position="504"/>
        <end position="512"/>
    </location>
</feature>
<feature type="strand" evidence="10">
    <location>
        <begin position="514"/>
        <end position="526"/>
    </location>
</feature>
<feature type="helix" evidence="10">
    <location>
        <begin position="527"/>
        <end position="531"/>
    </location>
</feature>
<feature type="strand" evidence="10">
    <location>
        <begin position="535"/>
        <end position="537"/>
    </location>
</feature>
<feature type="helix" evidence="10">
    <location>
        <begin position="543"/>
        <end position="553"/>
    </location>
</feature>
<feature type="strand" evidence="10">
    <location>
        <begin position="555"/>
        <end position="558"/>
    </location>
</feature>
<feature type="strand" evidence="10">
    <location>
        <begin position="562"/>
        <end position="564"/>
    </location>
</feature>
<feature type="helix" evidence="10">
    <location>
        <begin position="566"/>
        <end position="568"/>
    </location>
</feature>
<feature type="strand" evidence="10">
    <location>
        <begin position="571"/>
        <end position="575"/>
    </location>
</feature>
<feature type="strand" evidence="10">
    <location>
        <begin position="578"/>
        <end position="584"/>
    </location>
</feature>
<feature type="strand" evidence="10">
    <location>
        <begin position="594"/>
        <end position="602"/>
    </location>
</feature>
<feature type="strand" evidence="10">
    <location>
        <begin position="610"/>
        <end position="620"/>
    </location>
</feature>
<feature type="strand" evidence="10">
    <location>
        <begin position="623"/>
        <end position="630"/>
    </location>
</feature>
<feature type="strand" evidence="10">
    <location>
        <begin position="647"/>
        <end position="651"/>
    </location>
</feature>
<feature type="strand" evidence="10">
    <location>
        <begin position="667"/>
        <end position="674"/>
    </location>
</feature>
<feature type="turn" evidence="10">
    <location>
        <begin position="676"/>
        <end position="678"/>
    </location>
</feature>
<feature type="strand" evidence="10">
    <location>
        <begin position="681"/>
        <end position="688"/>
    </location>
</feature>
<evidence type="ECO:0000250" key="1"/>
<evidence type="ECO:0000250" key="2">
    <source>
        <dbReference type="UniProtKB" id="Q9NVM4"/>
    </source>
</evidence>
<evidence type="ECO:0000255" key="3">
    <source>
        <dbReference type="PROSITE-ProRule" id="PRU01015"/>
    </source>
</evidence>
<evidence type="ECO:0000269" key="4">
    <source>
    </source>
</evidence>
<evidence type="ECO:0000269" key="5">
    <source>
    </source>
</evidence>
<evidence type="ECO:0000269" key="6">
    <source>
    </source>
</evidence>
<evidence type="ECO:0000269" key="7">
    <source>
    </source>
</evidence>
<evidence type="ECO:0000305" key="8"/>
<evidence type="ECO:0007744" key="9">
    <source>
    </source>
</evidence>
<evidence type="ECO:0007829" key="10">
    <source>
        <dbReference type="PDB" id="4C4A"/>
    </source>
</evidence>
<evidence type="ECO:0007829" key="11">
    <source>
        <dbReference type="PDB" id="6OGN"/>
    </source>
</evidence>
<organism>
    <name type="scientific">Mus musculus</name>
    <name type="common">Mouse</name>
    <dbReference type="NCBI Taxonomy" id="10090"/>
    <lineage>
        <taxon>Eukaryota</taxon>
        <taxon>Metazoa</taxon>
        <taxon>Chordata</taxon>
        <taxon>Craniata</taxon>
        <taxon>Vertebrata</taxon>
        <taxon>Euteleostomi</taxon>
        <taxon>Mammalia</taxon>
        <taxon>Eutheria</taxon>
        <taxon>Euarchontoglires</taxon>
        <taxon>Glires</taxon>
        <taxon>Rodentia</taxon>
        <taxon>Myomorpha</taxon>
        <taxon>Muroidea</taxon>
        <taxon>Muridae</taxon>
        <taxon>Murinae</taxon>
        <taxon>Mus</taxon>
        <taxon>Mus</taxon>
    </lineage>
</organism>
<comment type="function">
    <text evidence="1 5">Arginine methyltransferase that can both catalyze the formation of omega-N monomethylarginine (MMA) and symmetrical dimethylarginine (sDMA), with a preference for the formation of MMA. Specifically mediates the symmetrical dimethylation of arginine residues in the small nuclear ribonucleoproteins Sm D1 (SNRPD1) and Sm D3 (SNRPD3); such methylation being required for the assembly and biogenesis of snRNP core particles. Specifically mediates the symmetric dimethylation of histone H4 'Arg-3' to form H4R3me2s. Plays a role in gene imprinting by being recruited by CTCFL at the H19 imprinted control region (ICR) and methylating histone H4 to form H4R3me2s, possibly leading to recruit DNA methyltransferases at these sites. May also play a role in embryonic stem cell (ESC) pluripotency. Also able to mediate the arginine methylation of histone H2A and myelin basic protein (MBP) in vitro; the relevance of such results is however unclear in vivo (By similarity).</text>
</comment>
<comment type="catalytic activity">
    <reaction evidence="2">
        <text>L-arginyl-[protein] + S-adenosyl-L-methionine = N(omega)-methyl-L-arginyl-[protein] + S-adenosyl-L-homocysteine + H(+)</text>
        <dbReference type="Rhea" id="RHEA:48100"/>
        <dbReference type="Rhea" id="RHEA-COMP:10532"/>
        <dbReference type="Rhea" id="RHEA-COMP:11990"/>
        <dbReference type="ChEBI" id="CHEBI:15378"/>
        <dbReference type="ChEBI" id="CHEBI:29965"/>
        <dbReference type="ChEBI" id="CHEBI:57856"/>
        <dbReference type="ChEBI" id="CHEBI:59789"/>
        <dbReference type="ChEBI" id="CHEBI:65280"/>
        <dbReference type="EC" id="2.1.1.321"/>
    </reaction>
</comment>
<comment type="subunit">
    <text evidence="1 5">Homodimer and heterodimer. Interacts with PRMT5 and SNRPD3 (By similarity). Interacts with CTCFL.</text>
</comment>
<comment type="interaction">
    <interactant intactId="EBI-15606508">
        <id>Q922X9</id>
    </interactant>
    <interactant intactId="EBI-11566304">
        <id>A2APF3</id>
        <label>Ctcfl</label>
    </interactant>
    <organismsDiffer>false</organismsDiffer>
    <experiments>3</experiments>
</comment>
<comment type="subcellular location">
    <subcellularLocation>
        <location evidence="1">Cytoplasm</location>
        <location evidence="1">Cytosol</location>
    </subcellularLocation>
    <subcellularLocation>
        <location evidence="1">Nucleus</location>
    </subcellularLocation>
</comment>
<comment type="developmental stage">
    <text evidence="4 5 6">Present in undifferentiated embryonic stem and germ cells; expression is lost when cells differentiate. In the developing testis, it is expressed at all stages. Present in all cells within the developing tubule, including gonocytes and spermatogonia (at protein level). It the developing kidney, it is confined to the nephrogenic zone in the cortical region, where the tips of the ureteric bud induce de novo formation of epithelia in the metanephric mesenchyme and early glomeruli. Expression is around 8-fold lower in adult kidneys.</text>
</comment>
<comment type="disruption phenotype">
    <text evidence="7">Mutants, shortly after birth, display significant reduced body size, reduced weight and shortened fifth metatarsals. They are subviable with about 45% of the expected number of mutant pups at P14. Surviving adult mice exhibit increased fat mass, reduced length and limb abnormalities. They also have reduced bone mineral content and density. Knockout mice show sexually dimorphic phenotypes, including changes in bone mineral content, bone mineral density and fifth metacarpal length that are only significant in females.</text>
</comment>
<comment type="similarity">
    <text evidence="3">Belongs to the class I-like SAM-binding methyltransferase superfamily. Protein arginine N-methyltransferase family. PRMT7 subfamily.</text>
</comment>
<comment type="sequence caution" evidence="8">
    <conflict type="erroneous initiation">
        <sequence resource="EMBL-CDS" id="BAD32582"/>
    </conflict>
    <text>Truncated N-terminus.</text>
</comment>
<reference key="1">
    <citation type="journal article" date="2006" name="Am. J. Respir. Cell Mol. Biol.">
        <title>Increased protein arginine methylation in chronic hypoxia: role of protein arginine methyltransferases.</title>
        <authorList>
            <person name="Yildirim A.O."/>
            <person name="Bulau P."/>
            <person name="Zakrzewicz D."/>
            <person name="Kitowska K.E."/>
            <person name="Weissmann N."/>
            <person name="Grimminger F."/>
            <person name="Morty R.E."/>
            <person name="Eickelberg O."/>
        </authorList>
    </citation>
    <scope>NUCLEOTIDE SEQUENCE [MRNA]</scope>
    <source>
        <strain>BALB/cJ</strain>
    </source>
</reference>
<reference key="2">
    <citation type="journal article" date="2004" name="DNA Res.">
        <title>Prediction of the coding sequences of mouse homologues of KIAA gene: IV. The complete nucleotide sequences of 500 mouse KIAA-homologous cDNAs identified by screening of terminal sequences of cDNA clones randomly sampled from size-fractionated libraries.</title>
        <authorList>
            <person name="Okazaki N."/>
            <person name="Kikuno R."/>
            <person name="Ohara R."/>
            <person name="Inamoto S."/>
            <person name="Koseki H."/>
            <person name="Hiraoka S."/>
            <person name="Saga Y."/>
            <person name="Seino S."/>
            <person name="Nishimura M."/>
            <person name="Kaisho T."/>
            <person name="Hoshino K."/>
            <person name="Kitamura H."/>
            <person name="Nagase T."/>
            <person name="Ohara O."/>
            <person name="Koga H."/>
        </authorList>
    </citation>
    <scope>NUCLEOTIDE SEQUENCE [LARGE SCALE MRNA]</scope>
    <source>
        <tissue>Embryonic tail</tissue>
    </source>
</reference>
<reference key="3">
    <citation type="journal article" date="2005" name="Science">
        <title>The transcriptional landscape of the mammalian genome.</title>
        <authorList>
            <person name="Carninci P."/>
            <person name="Kasukawa T."/>
            <person name="Katayama S."/>
            <person name="Gough J."/>
            <person name="Frith M.C."/>
            <person name="Maeda N."/>
            <person name="Oyama R."/>
            <person name="Ravasi T."/>
            <person name="Lenhard B."/>
            <person name="Wells C."/>
            <person name="Kodzius R."/>
            <person name="Shimokawa K."/>
            <person name="Bajic V.B."/>
            <person name="Brenner S.E."/>
            <person name="Batalov S."/>
            <person name="Forrest A.R."/>
            <person name="Zavolan M."/>
            <person name="Davis M.J."/>
            <person name="Wilming L.G."/>
            <person name="Aidinis V."/>
            <person name="Allen J.E."/>
            <person name="Ambesi-Impiombato A."/>
            <person name="Apweiler R."/>
            <person name="Aturaliya R.N."/>
            <person name="Bailey T.L."/>
            <person name="Bansal M."/>
            <person name="Baxter L."/>
            <person name="Beisel K.W."/>
            <person name="Bersano T."/>
            <person name="Bono H."/>
            <person name="Chalk A.M."/>
            <person name="Chiu K.P."/>
            <person name="Choudhary V."/>
            <person name="Christoffels A."/>
            <person name="Clutterbuck D.R."/>
            <person name="Crowe M.L."/>
            <person name="Dalla E."/>
            <person name="Dalrymple B.P."/>
            <person name="de Bono B."/>
            <person name="Della Gatta G."/>
            <person name="di Bernardo D."/>
            <person name="Down T."/>
            <person name="Engstrom P."/>
            <person name="Fagiolini M."/>
            <person name="Faulkner G."/>
            <person name="Fletcher C.F."/>
            <person name="Fukushima T."/>
            <person name="Furuno M."/>
            <person name="Futaki S."/>
            <person name="Gariboldi M."/>
            <person name="Georgii-Hemming P."/>
            <person name="Gingeras T.R."/>
            <person name="Gojobori T."/>
            <person name="Green R.E."/>
            <person name="Gustincich S."/>
            <person name="Harbers M."/>
            <person name="Hayashi Y."/>
            <person name="Hensch T.K."/>
            <person name="Hirokawa N."/>
            <person name="Hill D."/>
            <person name="Huminiecki L."/>
            <person name="Iacono M."/>
            <person name="Ikeo K."/>
            <person name="Iwama A."/>
            <person name="Ishikawa T."/>
            <person name="Jakt M."/>
            <person name="Kanapin A."/>
            <person name="Katoh M."/>
            <person name="Kawasawa Y."/>
            <person name="Kelso J."/>
            <person name="Kitamura H."/>
            <person name="Kitano H."/>
            <person name="Kollias G."/>
            <person name="Krishnan S.P."/>
            <person name="Kruger A."/>
            <person name="Kummerfeld S.K."/>
            <person name="Kurochkin I.V."/>
            <person name="Lareau L.F."/>
            <person name="Lazarevic D."/>
            <person name="Lipovich L."/>
            <person name="Liu J."/>
            <person name="Liuni S."/>
            <person name="McWilliam S."/>
            <person name="Madan Babu M."/>
            <person name="Madera M."/>
            <person name="Marchionni L."/>
            <person name="Matsuda H."/>
            <person name="Matsuzawa S."/>
            <person name="Miki H."/>
            <person name="Mignone F."/>
            <person name="Miyake S."/>
            <person name="Morris K."/>
            <person name="Mottagui-Tabar S."/>
            <person name="Mulder N."/>
            <person name="Nakano N."/>
            <person name="Nakauchi H."/>
            <person name="Ng P."/>
            <person name="Nilsson R."/>
            <person name="Nishiguchi S."/>
            <person name="Nishikawa S."/>
            <person name="Nori F."/>
            <person name="Ohara O."/>
            <person name="Okazaki Y."/>
            <person name="Orlando V."/>
            <person name="Pang K.C."/>
            <person name="Pavan W.J."/>
            <person name="Pavesi G."/>
            <person name="Pesole G."/>
            <person name="Petrovsky N."/>
            <person name="Piazza S."/>
            <person name="Reed J."/>
            <person name="Reid J.F."/>
            <person name="Ring B.Z."/>
            <person name="Ringwald M."/>
            <person name="Rost B."/>
            <person name="Ruan Y."/>
            <person name="Salzberg S.L."/>
            <person name="Sandelin A."/>
            <person name="Schneider C."/>
            <person name="Schoenbach C."/>
            <person name="Sekiguchi K."/>
            <person name="Semple C.A."/>
            <person name="Seno S."/>
            <person name="Sessa L."/>
            <person name="Sheng Y."/>
            <person name="Shibata Y."/>
            <person name="Shimada H."/>
            <person name="Shimada K."/>
            <person name="Silva D."/>
            <person name="Sinclair B."/>
            <person name="Sperling S."/>
            <person name="Stupka E."/>
            <person name="Sugiura K."/>
            <person name="Sultana R."/>
            <person name="Takenaka Y."/>
            <person name="Taki K."/>
            <person name="Tammoja K."/>
            <person name="Tan S.L."/>
            <person name="Tang S."/>
            <person name="Taylor M.S."/>
            <person name="Tegner J."/>
            <person name="Teichmann S.A."/>
            <person name="Ueda H.R."/>
            <person name="van Nimwegen E."/>
            <person name="Verardo R."/>
            <person name="Wei C.L."/>
            <person name="Yagi K."/>
            <person name="Yamanishi H."/>
            <person name="Zabarovsky E."/>
            <person name="Zhu S."/>
            <person name="Zimmer A."/>
            <person name="Hide W."/>
            <person name="Bult C."/>
            <person name="Grimmond S.M."/>
            <person name="Teasdale R.D."/>
            <person name="Liu E.T."/>
            <person name="Brusic V."/>
            <person name="Quackenbush J."/>
            <person name="Wahlestedt C."/>
            <person name="Mattick J.S."/>
            <person name="Hume D.A."/>
            <person name="Kai C."/>
            <person name="Sasaki D."/>
            <person name="Tomaru Y."/>
            <person name="Fukuda S."/>
            <person name="Kanamori-Katayama M."/>
            <person name="Suzuki M."/>
            <person name="Aoki J."/>
            <person name="Arakawa T."/>
            <person name="Iida J."/>
            <person name="Imamura K."/>
            <person name="Itoh M."/>
            <person name="Kato T."/>
            <person name="Kawaji H."/>
            <person name="Kawagashira N."/>
            <person name="Kawashima T."/>
            <person name="Kojima M."/>
            <person name="Kondo S."/>
            <person name="Konno H."/>
            <person name="Nakano K."/>
            <person name="Ninomiya N."/>
            <person name="Nishio T."/>
            <person name="Okada M."/>
            <person name="Plessy C."/>
            <person name="Shibata K."/>
            <person name="Shiraki T."/>
            <person name="Suzuki S."/>
            <person name="Tagami M."/>
            <person name="Waki K."/>
            <person name="Watahiki A."/>
            <person name="Okamura-Oho Y."/>
            <person name="Suzuki H."/>
            <person name="Kawai J."/>
            <person name="Hayashizaki Y."/>
        </authorList>
    </citation>
    <scope>NUCLEOTIDE SEQUENCE [LARGE SCALE MRNA]</scope>
    <source>
        <strain>C57BL/6J</strain>
        <strain>NOD</strain>
        <tissue>Epididymis</tissue>
    </source>
</reference>
<reference key="4">
    <citation type="submission" date="2005-07" db="EMBL/GenBank/DDBJ databases">
        <authorList>
            <person name="Mural R.J."/>
            <person name="Adams M.D."/>
            <person name="Myers E.W."/>
            <person name="Smith H.O."/>
            <person name="Venter J.C."/>
        </authorList>
    </citation>
    <scope>NUCLEOTIDE SEQUENCE [LARGE SCALE GENOMIC DNA]</scope>
</reference>
<reference key="5">
    <citation type="journal article" date="2004" name="Genome Res.">
        <title>The status, quality, and expansion of the NIH full-length cDNA project: the Mammalian Gene Collection (MGC).</title>
        <authorList>
            <consortium name="The MGC Project Team"/>
        </authorList>
    </citation>
    <scope>NUCLEOTIDE SEQUENCE [LARGE SCALE MRNA]</scope>
    <source>
        <strain>FVB/N-3</strain>
        <tissue>Mammary tumor</tissue>
    </source>
</reference>
<reference key="6">
    <citation type="journal article" date="2005" name="Proc. Natl. Acad. Sci. U.S.A.">
        <title>A Mendelian locus on chromosome 16 determines susceptibility to doxorubicin nephropathy in the mouse.</title>
        <authorList>
            <person name="Zheng Z."/>
            <person name="Schmidt-Ott K.M."/>
            <person name="Chua S."/>
            <person name="Foster K.A."/>
            <person name="Frankel R.Z."/>
            <person name="Pavlidis P."/>
            <person name="Barasch J."/>
            <person name="D'Agati V.D."/>
            <person name="Gharavi A.G."/>
        </authorList>
    </citation>
    <scope>DEVELOPMENTAL STAGE</scope>
</reference>
<reference key="7">
    <citation type="journal article" date="2006" name="PLoS Biol.">
        <title>The testis-specific factor CTCFL cooperates with the protein methyltransferase PRMT7 in H19 imprinting control region methylation.</title>
        <authorList>
            <person name="Jelinic P."/>
            <person name="Stehle J.-C."/>
            <person name="Shaw P."/>
        </authorList>
    </citation>
    <scope>FUNCTION</scope>
    <scope>DEVELOPMENTAL STAGE</scope>
    <scope>INTERACTION WITH CTCFL</scope>
</reference>
<reference key="8">
    <citation type="journal article" date="2008" name="Electrophoresis">
        <title>Nuclear proteome analysis of undifferentiated mouse embryonic stem and germ cells.</title>
        <authorList>
            <person name="Buhr N."/>
            <person name="Carapito C."/>
            <person name="Schaeffer C."/>
            <person name="Kieffer E."/>
            <person name="Van Dorsselaer A."/>
            <person name="Viville S."/>
        </authorList>
    </citation>
    <scope>DEVELOPMENTAL STAGE</scope>
</reference>
<reference key="9">
    <citation type="journal article" date="2010" name="Cell">
        <title>A tissue-specific atlas of mouse protein phosphorylation and expression.</title>
        <authorList>
            <person name="Huttlin E.L."/>
            <person name="Jedrychowski M.P."/>
            <person name="Elias J.E."/>
            <person name="Goswami T."/>
            <person name="Rad R."/>
            <person name="Beausoleil S.A."/>
            <person name="Villen J."/>
            <person name="Haas W."/>
            <person name="Sowa M.E."/>
            <person name="Gygi S.P."/>
        </authorList>
    </citation>
    <scope>IDENTIFICATION BY MASS SPECTROMETRY [LARGE SCALE ANALYSIS]</scope>
    <source>
        <tissue>Spleen</tissue>
        <tissue>Testis</tissue>
    </source>
</reference>
<reference key="10">
    <citation type="journal article" date="2014" name="Mol. Cell. Proteomics">
        <title>Immunoaffinity enrichment and mass spectrometry analysis of protein methylation.</title>
        <authorList>
            <person name="Guo A."/>
            <person name="Gu H."/>
            <person name="Zhou J."/>
            <person name="Mulhern D."/>
            <person name="Wang Y."/>
            <person name="Lee K.A."/>
            <person name="Yang V."/>
            <person name="Aguiar M."/>
            <person name="Kornhauser J."/>
            <person name="Jia X."/>
            <person name="Ren J."/>
            <person name="Beausoleil S.A."/>
            <person name="Silva J.C."/>
            <person name="Vemulapalli V."/>
            <person name="Bedford M.T."/>
            <person name="Comb M.J."/>
        </authorList>
    </citation>
    <scope>METHYLATION [LARGE SCALE ANALYSIS] AT ARG-32</scope>
    <scope>IDENTIFICATION BY MASS SPECTROMETRY [LARGE SCALE ANALYSIS]</scope>
    <source>
        <tissue>Brain</tissue>
    </source>
</reference>
<reference key="11">
    <citation type="journal article" date="2015" name="Nat. Genet.">
        <title>Discovery of four recessive developmental disorders using probabilistic genotype and phenotype matching among 4,125 families.</title>
        <authorList>
            <consortium name="DDD study"/>
            <person name="Akawi N."/>
            <person name="McRae J."/>
            <person name="Ansari M."/>
            <person name="Balasubramanian M."/>
            <person name="Blyth M."/>
            <person name="Brady A.F."/>
            <person name="Clayton S."/>
            <person name="Cole T."/>
            <person name="Deshpande C."/>
            <person name="Fitzgerald T.W."/>
            <person name="Foulds N."/>
            <person name="Francis R."/>
            <person name="Gabriel G."/>
            <person name="Gerety S.S."/>
            <person name="Goodship J."/>
            <person name="Hobson E."/>
            <person name="Jones W.D."/>
            <person name="Joss S."/>
            <person name="King D."/>
            <person name="Klena N."/>
            <person name="Kumar A."/>
            <person name="Lees M."/>
            <person name="Lelliott C."/>
            <person name="Lord J."/>
            <person name="McMullan D."/>
            <person name="O'Regan M."/>
            <person name="Osio D."/>
            <person name="Piombo V."/>
            <person name="Prigmore E."/>
            <person name="Rajan D."/>
            <person name="Rosser E."/>
            <person name="Sifrim A."/>
            <person name="Smith A."/>
            <person name="Swaminathan G.J."/>
            <person name="Turnpenny P."/>
            <person name="Whitworth J."/>
            <person name="Wright C.F."/>
            <person name="Firth H.V."/>
            <person name="Barrett J.C."/>
            <person name="Lo C.W."/>
            <person name="FitzPatrick D.R."/>
            <person name="Hurles M.E."/>
        </authorList>
    </citation>
    <scope>DISRUPTION PHENOTYPE</scope>
</reference>
<accession>Q922X9</accession>
<accession>Q3TRZ6</accession>
<accession>Q69Z62</accession>
<accession>Q6B955</accession>
<accession>Q6PG80</accession>